<sequence>MTRRAATVTRTTTETAISLSLTVDGKGEVSVTTGHGFTDHMLTLLGFWAGFDLTLTCNGDTHVDAHHTVEDAGLCLGQAFAQALGDRKGIARVGNARVPMDEALTEVDLDISGRPYLVYRGDELLPPVIAGDEADLWREFFKSFANGARINLHISLLYGKNGHHLLESAFKGLGLALRRAAACEREALLSTKGSLD</sequence>
<accession>Q311Y0</accession>
<reference key="1">
    <citation type="journal article" date="2011" name="J. Bacteriol.">
        <title>Complete genome sequence and updated annotation of Desulfovibrio alaskensis G20.</title>
        <authorList>
            <person name="Hauser L.J."/>
            <person name="Land M.L."/>
            <person name="Brown S.D."/>
            <person name="Larimer F."/>
            <person name="Keller K.L."/>
            <person name="Rapp-Giles B.J."/>
            <person name="Price M.N."/>
            <person name="Lin M."/>
            <person name="Bruce D.C."/>
            <person name="Detter J.C."/>
            <person name="Tapia R."/>
            <person name="Han C.S."/>
            <person name="Goodwin L.A."/>
            <person name="Cheng J.F."/>
            <person name="Pitluck S."/>
            <person name="Copeland A."/>
            <person name="Lucas S."/>
            <person name="Nolan M."/>
            <person name="Lapidus A.L."/>
            <person name="Palumbo A.V."/>
            <person name="Wall J.D."/>
        </authorList>
    </citation>
    <scope>NUCLEOTIDE SEQUENCE [LARGE SCALE GENOMIC DNA]</scope>
    <source>
        <strain>ATCC BAA-1058 / DSM 17464 / G20</strain>
    </source>
</reference>
<comment type="catalytic activity">
    <reaction evidence="1">
        <text>D-erythro-1-(imidazol-4-yl)glycerol 3-phosphate = 3-(imidazol-4-yl)-2-oxopropyl phosphate + H2O</text>
        <dbReference type="Rhea" id="RHEA:11040"/>
        <dbReference type="ChEBI" id="CHEBI:15377"/>
        <dbReference type="ChEBI" id="CHEBI:57766"/>
        <dbReference type="ChEBI" id="CHEBI:58278"/>
        <dbReference type="EC" id="4.2.1.19"/>
    </reaction>
</comment>
<comment type="pathway">
    <text evidence="1">Amino-acid biosynthesis; L-histidine biosynthesis; L-histidine from 5-phospho-alpha-D-ribose 1-diphosphate: step 6/9.</text>
</comment>
<comment type="subcellular location">
    <subcellularLocation>
        <location evidence="1">Cytoplasm</location>
    </subcellularLocation>
</comment>
<comment type="similarity">
    <text evidence="1">Belongs to the imidazoleglycerol-phosphate dehydratase family.</text>
</comment>
<organism>
    <name type="scientific">Oleidesulfovibrio alaskensis (strain ATCC BAA-1058 / DSM 17464 / G20)</name>
    <name type="common">Desulfovibrio alaskensis</name>
    <dbReference type="NCBI Taxonomy" id="207559"/>
    <lineage>
        <taxon>Bacteria</taxon>
        <taxon>Pseudomonadati</taxon>
        <taxon>Thermodesulfobacteriota</taxon>
        <taxon>Desulfovibrionia</taxon>
        <taxon>Desulfovibrionales</taxon>
        <taxon>Desulfovibrionaceae</taxon>
        <taxon>Oleidesulfovibrio</taxon>
    </lineage>
</organism>
<evidence type="ECO:0000255" key="1">
    <source>
        <dbReference type="HAMAP-Rule" id="MF_00076"/>
    </source>
</evidence>
<keyword id="KW-0028">Amino-acid biosynthesis</keyword>
<keyword id="KW-0963">Cytoplasm</keyword>
<keyword id="KW-0368">Histidine biosynthesis</keyword>
<keyword id="KW-0456">Lyase</keyword>
<keyword id="KW-1185">Reference proteome</keyword>
<proteinExistence type="inferred from homology"/>
<name>HIS7_OLEA2</name>
<dbReference type="EC" id="4.2.1.19" evidence="1"/>
<dbReference type="EMBL" id="CP000112">
    <property type="protein sequence ID" value="ABB38266.1"/>
    <property type="molecule type" value="Genomic_DNA"/>
</dbReference>
<dbReference type="RefSeq" id="WP_011367433.1">
    <property type="nucleotide sequence ID" value="NC_007519.1"/>
</dbReference>
<dbReference type="SMR" id="Q311Y0"/>
<dbReference type="STRING" id="207559.Dde_1467"/>
<dbReference type="KEGG" id="dde:Dde_1467"/>
<dbReference type="eggNOG" id="COG0131">
    <property type="taxonomic scope" value="Bacteria"/>
</dbReference>
<dbReference type="HOGENOM" id="CLU_044308_3_0_7"/>
<dbReference type="UniPathway" id="UPA00031">
    <property type="reaction ID" value="UER00011"/>
</dbReference>
<dbReference type="Proteomes" id="UP000002710">
    <property type="component" value="Chromosome"/>
</dbReference>
<dbReference type="GO" id="GO:0005737">
    <property type="term" value="C:cytoplasm"/>
    <property type="evidence" value="ECO:0007669"/>
    <property type="project" value="UniProtKB-SubCell"/>
</dbReference>
<dbReference type="GO" id="GO:0004424">
    <property type="term" value="F:imidazoleglycerol-phosphate dehydratase activity"/>
    <property type="evidence" value="ECO:0007669"/>
    <property type="project" value="UniProtKB-UniRule"/>
</dbReference>
<dbReference type="GO" id="GO:0000105">
    <property type="term" value="P:L-histidine biosynthetic process"/>
    <property type="evidence" value="ECO:0007669"/>
    <property type="project" value="UniProtKB-UniRule"/>
</dbReference>
<dbReference type="CDD" id="cd07914">
    <property type="entry name" value="IGPD"/>
    <property type="match status" value="1"/>
</dbReference>
<dbReference type="FunFam" id="3.30.230.40:FF:000001">
    <property type="entry name" value="Imidazoleglycerol-phosphate dehydratase HisB"/>
    <property type="match status" value="1"/>
</dbReference>
<dbReference type="FunFam" id="3.30.230.40:FF:000003">
    <property type="entry name" value="Imidazoleglycerol-phosphate dehydratase HisB"/>
    <property type="match status" value="1"/>
</dbReference>
<dbReference type="Gene3D" id="3.30.230.40">
    <property type="entry name" value="Imidazole glycerol phosphate dehydratase, domain 1"/>
    <property type="match status" value="2"/>
</dbReference>
<dbReference type="HAMAP" id="MF_00076">
    <property type="entry name" value="HisB"/>
    <property type="match status" value="1"/>
</dbReference>
<dbReference type="InterPro" id="IPR038494">
    <property type="entry name" value="IGPD_sf"/>
</dbReference>
<dbReference type="InterPro" id="IPR000807">
    <property type="entry name" value="ImidazoleglycerolP_deHydtase"/>
</dbReference>
<dbReference type="InterPro" id="IPR020565">
    <property type="entry name" value="ImidazoleglycerP_deHydtase_CS"/>
</dbReference>
<dbReference type="InterPro" id="IPR020568">
    <property type="entry name" value="Ribosomal_Su5_D2-typ_SF"/>
</dbReference>
<dbReference type="NCBIfam" id="NF002111">
    <property type="entry name" value="PRK00951.2-1"/>
    <property type="match status" value="1"/>
</dbReference>
<dbReference type="NCBIfam" id="NF002114">
    <property type="entry name" value="PRK00951.2-4"/>
    <property type="match status" value="1"/>
</dbReference>
<dbReference type="PANTHER" id="PTHR23133:SF2">
    <property type="entry name" value="IMIDAZOLEGLYCEROL-PHOSPHATE DEHYDRATASE"/>
    <property type="match status" value="1"/>
</dbReference>
<dbReference type="PANTHER" id="PTHR23133">
    <property type="entry name" value="IMIDAZOLEGLYCEROL-PHOSPHATE DEHYDRATASE HIS7"/>
    <property type="match status" value="1"/>
</dbReference>
<dbReference type="Pfam" id="PF00475">
    <property type="entry name" value="IGPD"/>
    <property type="match status" value="1"/>
</dbReference>
<dbReference type="SUPFAM" id="SSF54211">
    <property type="entry name" value="Ribosomal protein S5 domain 2-like"/>
    <property type="match status" value="2"/>
</dbReference>
<dbReference type="PROSITE" id="PS00954">
    <property type="entry name" value="IGP_DEHYDRATASE_1"/>
    <property type="match status" value="1"/>
</dbReference>
<dbReference type="PROSITE" id="PS00955">
    <property type="entry name" value="IGP_DEHYDRATASE_2"/>
    <property type="match status" value="1"/>
</dbReference>
<gene>
    <name evidence="1" type="primary">hisB</name>
    <name type="ordered locus">Dde_1467</name>
</gene>
<feature type="chain" id="PRO_0000336312" description="Imidazoleglycerol-phosphate dehydratase">
    <location>
        <begin position="1"/>
        <end position="196"/>
    </location>
</feature>
<protein>
    <recommendedName>
        <fullName evidence="1">Imidazoleglycerol-phosphate dehydratase</fullName>
        <shortName evidence="1">IGPD</shortName>
        <ecNumber evidence="1">4.2.1.19</ecNumber>
    </recommendedName>
</protein>